<evidence type="ECO:0000255" key="1">
    <source>
        <dbReference type="HAMAP-Rule" id="MF_02112"/>
    </source>
</evidence>
<feature type="chain" id="PRO_0000396957" description="Proteasome-associated ATPase">
    <location>
        <begin position="1"/>
        <end position="583"/>
    </location>
</feature>
<feature type="region of interest" description="Docks into pockets in the proteasome alpha-ring" evidence="1">
    <location>
        <begin position="582"/>
        <end position="583"/>
    </location>
</feature>
<feature type="coiled-coil region" evidence="1">
    <location>
        <begin position="2"/>
        <end position="90"/>
    </location>
</feature>
<feature type="binding site" evidence="1">
    <location>
        <begin position="271"/>
        <end position="276"/>
    </location>
    <ligand>
        <name>ATP</name>
        <dbReference type="ChEBI" id="CHEBI:30616"/>
    </ligand>
</feature>
<organism>
    <name type="scientific">Acidothermus cellulolyticus (strain ATCC 43068 / DSM 8971 / 11B)</name>
    <dbReference type="NCBI Taxonomy" id="351607"/>
    <lineage>
        <taxon>Bacteria</taxon>
        <taxon>Bacillati</taxon>
        <taxon>Actinomycetota</taxon>
        <taxon>Actinomycetes</taxon>
        <taxon>Acidothermales</taxon>
        <taxon>Acidothermaceae</taxon>
        <taxon>Acidothermus</taxon>
    </lineage>
</organism>
<name>ARC_ACIC1</name>
<comment type="function">
    <text evidence="1">ATPase which is responsible for recognizing, binding, unfolding and translocation of pupylated proteins into the bacterial 20S proteasome core particle. May be essential for opening the gate of the 20S proteasome via an interaction with its C-terminus, thereby allowing substrate entry and access to the site of proteolysis. Thus, the C-termini of the proteasomal ATPase may function like a 'key in a lock' to induce gate opening and therefore regulate proteolysis.</text>
</comment>
<comment type="pathway">
    <text evidence="1">Protein degradation; proteasomal Pup-dependent pathway.</text>
</comment>
<comment type="subunit">
    <text evidence="1">Homohexamer. Assembles into a hexameric ring structure that caps the 20S proteasome core. Strongly interacts with the prokaryotic ubiquitin-like protein Pup through a hydrophobic interface; the interacting region of ARC lies in its N-terminal coiled-coil domain. There is one Pup binding site per ARC hexamer ring. Upon ATP-binding, the C-terminus of ARC interacts with the alpha-rings of the proteasome core, possibly by binding to the intersubunit pockets.</text>
</comment>
<comment type="domain">
    <text evidence="1">Consists of three main regions, an N-terminal coiled-coil domain that binds to protein Pup and functions as a docking station, an interdomain involved in ARC hexamerization, and a C-terminal ATPase domain of the AAA type.</text>
</comment>
<comment type="similarity">
    <text evidence="1">Belongs to the AAA ATPase family.</text>
</comment>
<gene>
    <name evidence="1" type="primary">arc</name>
    <name type="ordered locus">Acel_1184</name>
</gene>
<dbReference type="EMBL" id="CP000481">
    <property type="protein sequence ID" value="ABK52956.1"/>
    <property type="molecule type" value="Genomic_DNA"/>
</dbReference>
<dbReference type="RefSeq" id="WP_011720019.1">
    <property type="nucleotide sequence ID" value="NC_008578.1"/>
</dbReference>
<dbReference type="SMR" id="A0LU46"/>
<dbReference type="FunCoup" id="A0LU46">
    <property type="interactions" value="123"/>
</dbReference>
<dbReference type="STRING" id="351607.Acel_1184"/>
<dbReference type="KEGG" id="ace:Acel_1184"/>
<dbReference type="eggNOG" id="COG1222">
    <property type="taxonomic scope" value="Bacteria"/>
</dbReference>
<dbReference type="HOGENOM" id="CLU_036054_0_0_11"/>
<dbReference type="InParanoid" id="A0LU46"/>
<dbReference type="OrthoDB" id="9809379at2"/>
<dbReference type="UniPathway" id="UPA00997"/>
<dbReference type="Proteomes" id="UP000008221">
    <property type="component" value="Chromosome"/>
</dbReference>
<dbReference type="GO" id="GO:0000502">
    <property type="term" value="C:proteasome complex"/>
    <property type="evidence" value="ECO:0007669"/>
    <property type="project" value="UniProtKB-KW"/>
</dbReference>
<dbReference type="GO" id="GO:0005524">
    <property type="term" value="F:ATP binding"/>
    <property type="evidence" value="ECO:0007669"/>
    <property type="project" value="UniProtKB-UniRule"/>
</dbReference>
<dbReference type="GO" id="GO:0016887">
    <property type="term" value="F:ATP hydrolysis activity"/>
    <property type="evidence" value="ECO:0007669"/>
    <property type="project" value="UniProtKB-UniRule"/>
</dbReference>
<dbReference type="GO" id="GO:0019941">
    <property type="term" value="P:modification-dependent protein catabolic process"/>
    <property type="evidence" value="ECO:0007669"/>
    <property type="project" value="InterPro"/>
</dbReference>
<dbReference type="GO" id="GO:0010498">
    <property type="term" value="P:proteasomal protein catabolic process"/>
    <property type="evidence" value="ECO:0007669"/>
    <property type="project" value="InterPro"/>
</dbReference>
<dbReference type="FunFam" id="2.40.50.140:FF:000109">
    <property type="entry name" value="AAA ATPase forming ring-shaped complexes"/>
    <property type="match status" value="1"/>
</dbReference>
<dbReference type="FunFam" id="3.40.50.300:FF:000155">
    <property type="entry name" value="AAA ATPase forming ring-shaped complexes"/>
    <property type="match status" value="1"/>
</dbReference>
<dbReference type="Gene3D" id="1.10.8.60">
    <property type="match status" value="1"/>
</dbReference>
<dbReference type="Gene3D" id="1.20.5.170">
    <property type="match status" value="1"/>
</dbReference>
<dbReference type="Gene3D" id="2.40.50.140">
    <property type="entry name" value="Nucleic acid-binding proteins"/>
    <property type="match status" value="2"/>
</dbReference>
<dbReference type="Gene3D" id="3.40.50.300">
    <property type="entry name" value="P-loop containing nucleotide triphosphate hydrolases"/>
    <property type="match status" value="1"/>
</dbReference>
<dbReference type="HAMAP" id="MF_02112">
    <property type="entry name" value="ARC_ATPase"/>
    <property type="match status" value="1"/>
</dbReference>
<dbReference type="InterPro" id="IPR003593">
    <property type="entry name" value="AAA+_ATPase"/>
</dbReference>
<dbReference type="InterPro" id="IPR050168">
    <property type="entry name" value="AAA_ATPase_domain"/>
</dbReference>
<dbReference type="InterPro" id="IPR003959">
    <property type="entry name" value="ATPase_AAA_core"/>
</dbReference>
<dbReference type="InterPro" id="IPR003960">
    <property type="entry name" value="ATPase_AAA_CS"/>
</dbReference>
<dbReference type="InterPro" id="IPR012340">
    <property type="entry name" value="NA-bd_OB-fold"/>
</dbReference>
<dbReference type="InterPro" id="IPR027417">
    <property type="entry name" value="P-loop_NTPase"/>
</dbReference>
<dbReference type="InterPro" id="IPR032501">
    <property type="entry name" value="Prot_ATP_ID_OB_2nd"/>
</dbReference>
<dbReference type="InterPro" id="IPR041626">
    <property type="entry name" value="Prot_ATP_ID_OB_N"/>
</dbReference>
<dbReference type="InterPro" id="IPR022482">
    <property type="entry name" value="Proteasome_ATPase"/>
</dbReference>
<dbReference type="NCBIfam" id="TIGR03689">
    <property type="entry name" value="pup_AAA"/>
    <property type="match status" value="1"/>
</dbReference>
<dbReference type="PANTHER" id="PTHR23077">
    <property type="entry name" value="AAA-FAMILY ATPASE"/>
    <property type="match status" value="1"/>
</dbReference>
<dbReference type="PANTHER" id="PTHR23077:SF144">
    <property type="entry name" value="PROTEASOME-ASSOCIATED ATPASE"/>
    <property type="match status" value="1"/>
</dbReference>
<dbReference type="Pfam" id="PF00004">
    <property type="entry name" value="AAA"/>
    <property type="match status" value="1"/>
</dbReference>
<dbReference type="Pfam" id="PF16450">
    <property type="entry name" value="Prot_ATP_ID_OB_C"/>
    <property type="match status" value="1"/>
</dbReference>
<dbReference type="Pfam" id="PF17758">
    <property type="entry name" value="Prot_ATP_ID_OB_N"/>
    <property type="match status" value="1"/>
</dbReference>
<dbReference type="SMART" id="SM00382">
    <property type="entry name" value="AAA"/>
    <property type="match status" value="1"/>
</dbReference>
<dbReference type="SUPFAM" id="SSF52540">
    <property type="entry name" value="P-loop containing nucleoside triphosphate hydrolases"/>
    <property type="match status" value="1"/>
</dbReference>
<dbReference type="PROSITE" id="PS00674">
    <property type="entry name" value="AAA"/>
    <property type="match status" value="1"/>
</dbReference>
<sequence length="583" mass="64922">MASREDRDAANARVIQLQQQVERLEEEVASLRRRLAESPRGSRSLEERLAAAQATIAGLTSQNERLVATLKEARDQIVALREEVDRLAQPPSGYGIFLGRHEDGTVDVFTGGRKLRVTVSPSVDVDSLRKGQEVMLNEALNVVRAMSFERQGEVVMFKELLDGDRALVIAHADEERVVMLADSLADTPLRVGDSLLIEPRSGFAYERIPKAEVEELVLEEVPDVDYSKIGGLSAQIEQIRDAIELPYLYPELFKEHKLRPPKGVLLYGPPGCGKTLIAKAVANSLAKKVAEVTGKPEGKSFFLNIKGPELLNKYVGETERHIRLVFQRAREKASGGWPVIVFFDEMDSIFRTRGSGVSSDVENTIVPQLLSEIDGVEGLENVIVIGASNREDMIDPAILRPGRLDVKIKIERPDAEAARDIFSKYITPDLPLHPDDLAEHGGSREATVQAMIQHAVERMYAETEENRFLEVTYANGDKEVLYFKDFNSGAMIQNIVDRAKKMAIKDFLETGQKGLRIQHLMAACYDEFKENEDLPNTTNPDDWARISGKKGERIVYIRTLISGKQGTEAGRSIDTIANTGQYL</sequence>
<protein>
    <recommendedName>
        <fullName evidence="1">Proteasome-associated ATPase</fullName>
    </recommendedName>
    <alternativeName>
        <fullName evidence="1">AAA ATPase forming ring-shaped complexes</fullName>
        <shortName evidence="1">ARC</shortName>
    </alternativeName>
    <alternativeName>
        <fullName evidence="1">Proteasomal ATPase</fullName>
    </alternativeName>
</protein>
<accession>A0LU46</accession>
<reference key="1">
    <citation type="journal article" date="2009" name="Genome Res.">
        <title>Complete genome of the cellulolytic thermophile Acidothermus cellulolyticus 11B provides insights into its ecophysiological and evolutionary adaptations.</title>
        <authorList>
            <person name="Barabote R.D."/>
            <person name="Xie G."/>
            <person name="Leu D.H."/>
            <person name="Normand P."/>
            <person name="Necsulea A."/>
            <person name="Daubin V."/>
            <person name="Medigue C."/>
            <person name="Adney W.S."/>
            <person name="Xu X.C."/>
            <person name="Lapidus A."/>
            <person name="Parales R.E."/>
            <person name="Detter C."/>
            <person name="Pujic P."/>
            <person name="Bruce D."/>
            <person name="Lavire C."/>
            <person name="Challacombe J.F."/>
            <person name="Brettin T.S."/>
            <person name="Berry A.M."/>
        </authorList>
    </citation>
    <scope>NUCLEOTIDE SEQUENCE [LARGE SCALE GENOMIC DNA]</scope>
    <source>
        <strain>ATCC 43068 / DSM 8971 / 11B</strain>
    </source>
</reference>
<proteinExistence type="inferred from homology"/>
<keyword id="KW-0067">ATP-binding</keyword>
<keyword id="KW-0143">Chaperone</keyword>
<keyword id="KW-0175">Coiled coil</keyword>
<keyword id="KW-0547">Nucleotide-binding</keyword>
<keyword id="KW-0647">Proteasome</keyword>
<keyword id="KW-1185">Reference proteome</keyword>